<name>IEND2_NEUCR</name>
<sequence length="452" mass="50902">MNITLILFLIGILGFVLNRKNIILMLISIEIMLLAITFLILVSSLNMDDIIGQTYAIYIIVVAGAESAIGLAILVAFYRLINSPVKNPRSNYSGDPAPPSGGRGPYLHFNLLPVVSSCNLIQSRNYSSVLHRKIPTHTSCVWAGLNPSFITGFSDAEGSFVVTILKNPRYKIGWNVQARFQIKLNEKDRALLLLIQNYFDNIGYISKINDRSTVEFRVSDITSLNNIIIPHFEKYQLITNKYGDLVIFKQIVSLMLENKHTTLEGLKEILEHRASLNWGLSKTLKESFPSIIPVKRVKIENNILSNLSSLPLLPGGGNWVAGFSSGEANFFITMSGTKVWLRFSIAQDSRDILLLKSLVKFFNCGYIAQYKNRKVCEFIVTKINDIIIYIIPFFDQYKIEGSKYNDYVKFKEAAILIKNKEHLTEKGLNKIIELKNSLPPPASLEGGMNKNI</sequence>
<keyword id="KW-0255">Endonuclease</keyword>
<keyword id="KW-0378">Hydrolase</keyword>
<keyword id="KW-0404">Intron homing</keyword>
<keyword id="KW-0472">Membrane</keyword>
<keyword id="KW-0496">Mitochondrion</keyword>
<keyword id="KW-0540">Nuclease</keyword>
<keyword id="KW-1185">Reference proteome</keyword>
<keyword id="KW-0812">Transmembrane</keyword>
<keyword id="KW-1133">Transmembrane helix</keyword>
<geneLocation type="mitochondrion"/>
<accession>Q35134</accession>
<accession>M1QL59</accession>
<evidence type="ECO:0000250" key="1"/>
<evidence type="ECO:0000255" key="2"/>
<evidence type="ECO:0000305" key="3"/>
<feature type="chain" id="PRO_0000414734" description="Probable intron-encoded endonuclease 2">
    <location>
        <begin position="1"/>
        <end position="452"/>
    </location>
</feature>
<feature type="transmembrane region" description="Helical" evidence="2">
    <location>
        <begin position="1"/>
        <end position="21"/>
    </location>
</feature>
<feature type="transmembrane region" description="Helical" evidence="2">
    <location>
        <begin position="22"/>
        <end position="42"/>
    </location>
</feature>
<feature type="transmembrane region" description="Helical" evidence="2">
    <location>
        <begin position="57"/>
        <end position="77"/>
    </location>
</feature>
<feature type="region of interest" description="ndh-4L exon 1 encoded">
    <location>
        <begin position="1"/>
        <end position="80"/>
    </location>
</feature>
<feature type="region of interest" description="ndh-4L intron 1 encoded">
    <location>
        <begin position="81"/>
        <end position="452"/>
    </location>
</feature>
<dbReference type="EC" id="3.1.-.-"/>
<dbReference type="EMBL" id="X05115">
    <property type="protein sequence ID" value="CAA28761.1"/>
    <property type="status" value="ALT_SEQ"/>
    <property type="molecule type" value="Genomic_DNA"/>
</dbReference>
<dbReference type="EMBL" id="KC683708">
    <property type="protein sequence ID" value="AGG15998.1"/>
    <property type="molecule type" value="Genomic_DNA"/>
</dbReference>
<dbReference type="PIR" id="S10840">
    <property type="entry name" value="S10840"/>
</dbReference>
<dbReference type="RefSeq" id="YP_009126710.1">
    <property type="nucleotide sequence ID" value="NC_026614.1"/>
</dbReference>
<dbReference type="SMR" id="Q35134"/>
<dbReference type="STRING" id="367110.Q35134"/>
<dbReference type="EnsemblFungi" id="AGG15998">
    <property type="protein sequence ID" value="AGG15998"/>
    <property type="gene ID" value="NCU16009"/>
</dbReference>
<dbReference type="GeneID" id="23681562"/>
<dbReference type="KEGG" id="ncr:NCU16009"/>
<dbReference type="VEuPathDB" id="FungiDB:NCU16009"/>
<dbReference type="InParanoid" id="Q35134"/>
<dbReference type="OrthoDB" id="5412286at2759"/>
<dbReference type="Proteomes" id="UP000001805">
    <property type="component" value="Mitochondrion"/>
</dbReference>
<dbReference type="GO" id="GO:0031966">
    <property type="term" value="C:mitochondrial membrane"/>
    <property type="evidence" value="ECO:0007669"/>
    <property type="project" value="UniProtKB-SubCell"/>
</dbReference>
<dbReference type="GO" id="GO:0045271">
    <property type="term" value="C:respiratory chain complex I"/>
    <property type="evidence" value="ECO:0000318"/>
    <property type="project" value="GO_Central"/>
</dbReference>
<dbReference type="GO" id="GO:0004519">
    <property type="term" value="F:endonuclease activity"/>
    <property type="evidence" value="ECO:0007669"/>
    <property type="project" value="UniProtKB-KW"/>
</dbReference>
<dbReference type="GO" id="GO:0016651">
    <property type="term" value="F:oxidoreductase activity, acting on NAD(P)H"/>
    <property type="evidence" value="ECO:0007669"/>
    <property type="project" value="InterPro"/>
</dbReference>
<dbReference type="GO" id="GO:0042773">
    <property type="term" value="P:ATP synthesis coupled electron transport"/>
    <property type="evidence" value="ECO:0007669"/>
    <property type="project" value="InterPro"/>
</dbReference>
<dbReference type="GO" id="GO:0006314">
    <property type="term" value="P:intron homing"/>
    <property type="evidence" value="ECO:0007669"/>
    <property type="project" value="UniProtKB-KW"/>
</dbReference>
<dbReference type="FunFam" id="1.10.287.3510:FF:000004">
    <property type="entry name" value="NADH-ubiquinone oxidoreductase chain 4L"/>
    <property type="match status" value="1"/>
</dbReference>
<dbReference type="FunFam" id="3.10.28.10:FF:000024">
    <property type="entry name" value="Probable intron-encoded endonuclease 2"/>
    <property type="match status" value="1"/>
</dbReference>
<dbReference type="Gene3D" id="1.10.287.3510">
    <property type="match status" value="1"/>
</dbReference>
<dbReference type="Gene3D" id="3.10.28.10">
    <property type="entry name" value="Homing endonucleases"/>
    <property type="match status" value="2"/>
</dbReference>
<dbReference type="HAMAP" id="MF_01456">
    <property type="entry name" value="NDH1_NuoK"/>
    <property type="match status" value="1"/>
</dbReference>
<dbReference type="InterPro" id="IPR027434">
    <property type="entry name" value="Homing_endonucl"/>
</dbReference>
<dbReference type="InterPro" id="IPR004860">
    <property type="entry name" value="LAGLIDADG_dom"/>
</dbReference>
<dbReference type="InterPro" id="IPR051289">
    <property type="entry name" value="LAGLIDADG_Endonuclease"/>
</dbReference>
<dbReference type="InterPro" id="IPR001133">
    <property type="entry name" value="NADH_UbQ_OxRdtase_chain4L/K"/>
</dbReference>
<dbReference type="InterPro" id="IPR039428">
    <property type="entry name" value="NUOK/Mnh_C1-like"/>
</dbReference>
<dbReference type="PANTHER" id="PTHR36181:SF3">
    <property type="entry name" value="INTRON-ENCODED DNA ENDONUCLEASE AI5 BETA"/>
    <property type="match status" value="1"/>
</dbReference>
<dbReference type="PANTHER" id="PTHR36181">
    <property type="entry name" value="INTRON-ENCODED ENDONUCLEASE AI3-RELATED"/>
    <property type="match status" value="1"/>
</dbReference>
<dbReference type="Pfam" id="PF00961">
    <property type="entry name" value="LAGLIDADG_1"/>
    <property type="match status" value="2"/>
</dbReference>
<dbReference type="Pfam" id="PF00420">
    <property type="entry name" value="Oxidored_q2"/>
    <property type="match status" value="1"/>
</dbReference>
<dbReference type="SUPFAM" id="SSF55608">
    <property type="entry name" value="Homing endonucleases"/>
    <property type="match status" value="2"/>
</dbReference>
<organism>
    <name type="scientific">Neurospora crassa (strain ATCC 24698 / 74-OR23-1A / CBS 708.71 / DSM 1257 / FGSC 987)</name>
    <dbReference type="NCBI Taxonomy" id="367110"/>
    <lineage>
        <taxon>Eukaryota</taxon>
        <taxon>Fungi</taxon>
        <taxon>Dikarya</taxon>
        <taxon>Ascomycota</taxon>
        <taxon>Pezizomycotina</taxon>
        <taxon>Sordariomycetes</taxon>
        <taxon>Sordariomycetidae</taxon>
        <taxon>Sordariales</taxon>
        <taxon>Sordariaceae</taxon>
        <taxon>Neurospora</taxon>
    </lineage>
</organism>
<proteinExistence type="inferred from homology"/>
<protein>
    <recommendedName>
        <fullName>Probable intron-encoded endonuclease 2</fullName>
        <ecNumber>3.1.-.-</ecNumber>
    </recommendedName>
</protein>
<comment type="function">
    <text evidence="1">Mitochondrial DNA endonuclease involved in intron homing.</text>
</comment>
<comment type="subcellular location">
    <subcellularLocation>
        <location evidence="3">Mitochondrion membrane</location>
        <topology evidence="3">Multi-pass membrane protein</topology>
    </subcellularLocation>
</comment>
<comment type="miscellaneous">
    <text>Encoded from partially processed ndh-4L mRNA that terminates with the in-frame coding sequence of the first intron.</text>
</comment>
<comment type="similarity">
    <text evidence="3">In the N-terminal section; belongs to the complex I subunit 4L family.</text>
</comment>
<comment type="similarity">
    <text evidence="3">In the C-terminal section; belongs to the LAGLIDADG endonuclease family.</text>
</comment>
<comment type="sequence caution" evidence="3">
    <conflict type="erroneous gene model prediction">
        <sequence resource="EMBL-CDS" id="CAA28761"/>
    </conflict>
</comment>
<gene>
    <name type="ORF">NCU16009</name>
</gene>
<reference key="1">
    <citation type="journal article" date="1987" name="Mol. Gen. Genet.">
        <title>Structure and expression of the overlapping ND4L and ND5 genes of Neurospora crassa mitochondria.</title>
        <authorList>
            <person name="Nelson M.A."/>
            <person name="Macino G."/>
        </authorList>
    </citation>
    <scope>NUCLEOTIDE SEQUENCE [GENOMIC DNA]</scope>
    <source>
        <strain>ATCC 24698 / 74-OR23-1A / CBS 708.71 / DSM 1257 / FGSC 987</strain>
    </source>
</reference>
<reference key="2">
    <citation type="journal article" date="2003" name="Nature">
        <title>The genome sequence of the filamentous fungus Neurospora crassa.</title>
        <authorList>
            <person name="Galagan J.E."/>
            <person name="Calvo S.E."/>
            <person name="Borkovich K.A."/>
            <person name="Selker E.U."/>
            <person name="Read N.D."/>
            <person name="Jaffe D.B."/>
            <person name="FitzHugh W."/>
            <person name="Ma L.-J."/>
            <person name="Smirnov S."/>
            <person name="Purcell S."/>
            <person name="Rehman B."/>
            <person name="Elkins T."/>
            <person name="Engels R."/>
            <person name="Wang S."/>
            <person name="Nielsen C.B."/>
            <person name="Butler J."/>
            <person name="Endrizzi M."/>
            <person name="Qui D."/>
            <person name="Ianakiev P."/>
            <person name="Bell-Pedersen D."/>
            <person name="Nelson M.A."/>
            <person name="Werner-Washburne M."/>
            <person name="Selitrennikoff C.P."/>
            <person name="Kinsey J.A."/>
            <person name="Braun E.L."/>
            <person name="Zelter A."/>
            <person name="Schulte U."/>
            <person name="Kothe G.O."/>
            <person name="Jedd G."/>
            <person name="Mewes H.-W."/>
            <person name="Staben C."/>
            <person name="Marcotte E."/>
            <person name="Greenberg D."/>
            <person name="Roy A."/>
            <person name="Foley K."/>
            <person name="Naylor J."/>
            <person name="Stange-Thomann N."/>
            <person name="Barrett R."/>
            <person name="Gnerre S."/>
            <person name="Kamal M."/>
            <person name="Kamvysselis M."/>
            <person name="Mauceli E.W."/>
            <person name="Bielke C."/>
            <person name="Rudd S."/>
            <person name="Frishman D."/>
            <person name="Krystofova S."/>
            <person name="Rasmussen C."/>
            <person name="Metzenberg R.L."/>
            <person name="Perkins D.D."/>
            <person name="Kroken S."/>
            <person name="Cogoni C."/>
            <person name="Macino G."/>
            <person name="Catcheside D.E.A."/>
            <person name="Li W."/>
            <person name="Pratt R.J."/>
            <person name="Osmani S.A."/>
            <person name="DeSouza C.P.C."/>
            <person name="Glass N.L."/>
            <person name="Orbach M.J."/>
            <person name="Berglund J.A."/>
            <person name="Voelker R."/>
            <person name="Yarden O."/>
            <person name="Plamann M."/>
            <person name="Seiler S."/>
            <person name="Dunlap J.C."/>
            <person name="Radford A."/>
            <person name="Aramayo R."/>
            <person name="Natvig D.O."/>
            <person name="Alex L.A."/>
            <person name="Mannhaupt G."/>
            <person name="Ebbole D.J."/>
            <person name="Freitag M."/>
            <person name="Paulsen I."/>
            <person name="Sachs M.S."/>
            <person name="Lander E.S."/>
            <person name="Nusbaum C."/>
            <person name="Birren B.W."/>
        </authorList>
    </citation>
    <scope>NUCLEOTIDE SEQUENCE [LARGE SCALE GENOMIC DNA]</scope>
    <source>
        <strain>ATCC 24698 / 74-OR23-1A / CBS 708.71 / DSM 1257 / FGSC 987</strain>
    </source>
</reference>
<reference key="3">
    <citation type="book" date="2004" name="The Mycota II, Genetics and Biotechnology (2nd edition)">
        <title>Mitochondrial genetics of Neurospora.</title>
        <editorList>
            <person name="Kueck U."/>
        </editorList>
        <authorList>
            <person name="Kennell J.C."/>
            <person name="Collins R.A."/>
            <person name="Griffiths A.J.F."/>
            <person name="Nargang F.E."/>
        </authorList>
    </citation>
    <scope>GENOME REANNOTATION</scope>
    <source>
        <strain>ATCC 24698 / 74-OR23-1A / CBS 708.71 / DSM 1257 / FGSC 987</strain>
    </source>
</reference>